<reference key="1">
    <citation type="journal article" date="2011" name="Nature">
        <title>The Medicago genome provides insight into the evolution of rhizobial symbioses.</title>
        <authorList>
            <person name="Young N.D."/>
            <person name="Debelle F."/>
            <person name="Oldroyd G.E.D."/>
            <person name="Geurts R."/>
            <person name="Cannon S.B."/>
            <person name="Udvardi M.K."/>
            <person name="Benedito V.A."/>
            <person name="Mayer K.F.X."/>
            <person name="Gouzy J."/>
            <person name="Schoof H."/>
            <person name="Van de Peer Y."/>
            <person name="Proost S."/>
            <person name="Cook D.R."/>
            <person name="Meyers B.C."/>
            <person name="Spannagl M."/>
            <person name="Cheung F."/>
            <person name="De Mita S."/>
            <person name="Krishnakumar V."/>
            <person name="Gundlach H."/>
            <person name="Zhou S."/>
            <person name="Mudge J."/>
            <person name="Bharti A.K."/>
            <person name="Murray J.D."/>
            <person name="Naoumkina M.A."/>
            <person name="Rosen B."/>
            <person name="Silverstein K.A.T."/>
            <person name="Tang H."/>
            <person name="Rombauts S."/>
            <person name="Zhao P.X."/>
            <person name="Zhou P."/>
            <person name="Barbe V."/>
            <person name="Bardou P."/>
            <person name="Bechner M."/>
            <person name="Bellec A."/>
            <person name="Berger A."/>
            <person name="Berges H."/>
            <person name="Bidwell S."/>
            <person name="Bisseling T."/>
            <person name="Choisne N."/>
            <person name="Couloux A."/>
            <person name="Denny R."/>
            <person name="Deshpande S."/>
            <person name="Dai X."/>
            <person name="Doyle J.J."/>
            <person name="Dudez A.-M."/>
            <person name="Farmer A.D."/>
            <person name="Fouteau S."/>
            <person name="Franken C."/>
            <person name="Gibelin C."/>
            <person name="Gish J."/>
            <person name="Goldstein S."/>
            <person name="Gonzalez A.J."/>
            <person name="Green P.J."/>
            <person name="Hallab A."/>
            <person name="Hartog M."/>
            <person name="Hua A."/>
            <person name="Humphray S.J."/>
            <person name="Jeong D.-H."/>
            <person name="Jing Y."/>
            <person name="Jocker A."/>
            <person name="Kenton S.M."/>
            <person name="Kim D.-J."/>
            <person name="Klee K."/>
            <person name="Lai H."/>
            <person name="Lang C."/>
            <person name="Lin S."/>
            <person name="Macmil S.L."/>
            <person name="Magdelenat G."/>
            <person name="Matthews L."/>
            <person name="McCorrison J."/>
            <person name="Monaghan E.L."/>
            <person name="Mun J.-H."/>
            <person name="Najar F.Z."/>
            <person name="Nicholson C."/>
            <person name="Noirot C."/>
            <person name="O'Bleness M."/>
            <person name="Paule C.R."/>
            <person name="Poulain J."/>
            <person name="Prion F."/>
            <person name="Qin B."/>
            <person name="Qu C."/>
            <person name="Retzel E.F."/>
            <person name="Riddle C."/>
            <person name="Sallet E."/>
            <person name="Samain S."/>
            <person name="Samson N."/>
            <person name="Sanders I."/>
            <person name="Saurat O."/>
            <person name="Scarpelli C."/>
            <person name="Schiex T."/>
            <person name="Segurens B."/>
            <person name="Severin A.J."/>
            <person name="Sherrier D.J."/>
            <person name="Shi R."/>
            <person name="Sims S."/>
            <person name="Singer S.R."/>
            <person name="Sinharoy S."/>
            <person name="Sterck L."/>
            <person name="Viollet A."/>
            <person name="Wang B.-B."/>
            <person name="Wang K."/>
            <person name="Wang M."/>
            <person name="Wang X."/>
            <person name="Warfsmann J."/>
            <person name="Weissenbach J."/>
            <person name="White D.D."/>
            <person name="White J.D."/>
            <person name="Wiley G.B."/>
            <person name="Wincker P."/>
            <person name="Xing Y."/>
            <person name="Yang L."/>
            <person name="Yao Z."/>
            <person name="Ying F."/>
            <person name="Zhai J."/>
            <person name="Zhou L."/>
            <person name="Zuber A."/>
            <person name="Denarie J."/>
            <person name="Dixon R.A."/>
            <person name="May G.D."/>
            <person name="Schwartz D.C."/>
            <person name="Rogers J."/>
            <person name="Quetier F."/>
            <person name="Town C.D."/>
            <person name="Roe B.A."/>
        </authorList>
    </citation>
    <scope>NUCLEOTIDE SEQUENCE [LARGE SCALE GENOMIC DNA]</scope>
    <source>
        <strain>cv. Jemalong A17</strain>
    </source>
</reference>
<reference key="2">
    <citation type="journal article" date="2014" name="BMC Genomics">
        <title>An improved genome release (version Mt4.0) for the model legume Medicago truncatula.</title>
        <authorList>
            <person name="Tang H."/>
            <person name="Krishnakumar V."/>
            <person name="Bidwell S."/>
            <person name="Rosen B."/>
            <person name="Chan A."/>
            <person name="Zhou S."/>
            <person name="Gentzbittel L."/>
            <person name="Childs K.L."/>
            <person name="Yandell M."/>
            <person name="Gundlach H."/>
            <person name="Mayer K.F."/>
            <person name="Schwartz D.C."/>
            <person name="Town C.D."/>
        </authorList>
    </citation>
    <scope>GENOME REANNOTATION</scope>
    <source>
        <strain>cv. Jemalong A17</strain>
    </source>
</reference>
<reference key="3">
    <citation type="journal article" date="2018" name="Nat. Plants">
        <title>Whole-genome landscape of Medicago truncatula symbiotic genes.</title>
        <authorList>
            <person name="Pecrix Y."/>
            <person name="Staton S.E."/>
            <person name="Sallet E."/>
            <person name="Lelandais-Briere C."/>
            <person name="Moreau S."/>
            <person name="Carrere S."/>
            <person name="Blein T."/>
            <person name="Jardinaud M.F."/>
            <person name="Latrasse D."/>
            <person name="Zouine M."/>
            <person name="Zahm M."/>
            <person name="Kreplak J."/>
            <person name="Mayjonade B."/>
            <person name="Satge C."/>
            <person name="Perez M."/>
            <person name="Cauet S."/>
            <person name="Marande W."/>
            <person name="Chantry-Darmon C."/>
            <person name="Lopez-Roques C."/>
            <person name="Bouchez O."/>
            <person name="Berard A."/>
            <person name="Debelle F."/>
            <person name="Munos S."/>
            <person name="Bendahmane A."/>
            <person name="Berges H."/>
            <person name="Niebel A."/>
            <person name="Buitink J."/>
            <person name="Frugier F."/>
            <person name="Benhamed M."/>
            <person name="Crespi M."/>
            <person name="Gouzy J."/>
            <person name="Gamas P."/>
        </authorList>
    </citation>
    <scope>NUCLEOTIDE SEQUENCE [LARGE SCALE GENOMIC DNA]</scope>
    <source>
        <strain>cv. Jemalong A17</strain>
    </source>
</reference>
<reference key="4">
    <citation type="journal article" date="2015" name="Plant Cell">
        <title>Suppression of arbuscule degeneration in Medicago truncatula phosphate transporter4 mutants is dependent on the ammonium transporter 2 family protein AMT2;3.</title>
        <authorList>
            <person name="Breuillin-Sessoms F."/>
            <person name="Floss D.S."/>
            <person name="Gomez S.K."/>
            <person name="Pumplin N."/>
            <person name="Ding Y."/>
            <person name="Levesque-Tremblay V."/>
            <person name="Noar R.D."/>
            <person name="Daniels D.A."/>
            <person name="Bravo A."/>
            <person name="Eaglesham J.B."/>
            <person name="Benedito V.A."/>
            <person name="Udvardi M.K."/>
            <person name="Harrison M.J."/>
        </authorList>
    </citation>
    <scope>FUNCTION</scope>
    <scope>DISRUPTION PHENOTYPE</scope>
    <scope>INDUCTION BY ARBUSCULAR MYCORRHIZAL FUNGI</scope>
    <source>
        <strain>cv. Jemalong A17</strain>
    </source>
</reference>
<reference key="5">
    <citation type="journal article" date="2015" name="Plant Physiol.">
        <title>Hyphal branching during arbuscule development requires reduced arbuscular mycorrhiza1.</title>
        <authorList>
            <person name="Park H.-J."/>
            <person name="Floss D.S."/>
            <person name="Levesque-Tremblay V."/>
            <person name="Bravo A."/>
            <person name="Harrison M.J."/>
        </authorList>
    </citation>
    <scope>INDUCTION BY RAM1 AND GLOMUS VERSIFORME</scope>
</reference>
<organism>
    <name type="scientific">Medicago truncatula</name>
    <name type="common">Barrel medic</name>
    <name type="synonym">Medicago tribuloides</name>
    <dbReference type="NCBI Taxonomy" id="3880"/>
    <lineage>
        <taxon>Eukaryota</taxon>
        <taxon>Viridiplantae</taxon>
        <taxon>Streptophyta</taxon>
        <taxon>Embryophyta</taxon>
        <taxon>Tracheophyta</taxon>
        <taxon>Spermatophyta</taxon>
        <taxon>Magnoliopsida</taxon>
        <taxon>eudicotyledons</taxon>
        <taxon>Gunneridae</taxon>
        <taxon>Pentapetalae</taxon>
        <taxon>rosids</taxon>
        <taxon>fabids</taxon>
        <taxon>Fabales</taxon>
        <taxon>Fabaceae</taxon>
        <taxon>Papilionoideae</taxon>
        <taxon>50 kb inversion clade</taxon>
        <taxon>NPAAA clade</taxon>
        <taxon>Hologalegina</taxon>
        <taxon>IRL clade</taxon>
        <taxon>Trifolieae</taxon>
        <taxon>Medicago</taxon>
    </lineage>
</organism>
<name>AMT24_MEDTR</name>
<proteinExistence type="evidence at transcript level"/>
<keyword id="KW-0924">Ammonia transport</keyword>
<keyword id="KW-1003">Cell membrane</keyword>
<keyword id="KW-0325">Glycoprotein</keyword>
<keyword id="KW-0472">Membrane</keyword>
<keyword id="KW-1185">Reference proteome</keyword>
<keyword id="KW-0812">Transmembrane</keyword>
<keyword id="KW-1133">Transmembrane helix</keyword>
<keyword id="KW-0813">Transport</keyword>
<comment type="function">
    <text evidence="1 5">Involved in ammonium transport (PubMed:25841038). May be involved in arbuscular mycorrhizal (AM) symbiosis with AM fungi (By similarity).</text>
</comment>
<comment type="subcellular location">
    <subcellularLocation>
        <location evidence="2">Cell membrane</location>
        <topology evidence="3">Multi-pass membrane protein</topology>
    </subcellularLocation>
</comment>
<comment type="induction">
    <text evidence="5 6">Accumulates in roots, in a RAM1-dependent manner, during colonization by arbuscular mycorrhizal (AM) fungi (e.g. Glomus versiforme).</text>
</comment>
<comment type="disruption phenotype">
    <text evidence="5">Normal arbuscular mycorrhizal (AM) symbiosis with AM fungi.</text>
</comment>
<comment type="similarity">
    <text evidence="8">Belongs to the ammonia transporter channel (TC 1.A.11.2) family.</text>
</comment>
<feature type="chain" id="PRO_0000450042" description="Ammonium transporter 2 member 4">
    <location>
        <begin position="1"/>
        <end position="480"/>
    </location>
</feature>
<feature type="topological domain" description="Extracellular" evidence="8">
    <location>
        <begin position="1"/>
        <end position="27"/>
    </location>
</feature>
<feature type="transmembrane region" description="Helical; Name=1" evidence="3">
    <location>
        <begin position="28"/>
        <end position="48"/>
    </location>
</feature>
<feature type="topological domain" description="Cytoplasmic" evidence="8">
    <location>
        <begin position="49"/>
        <end position="51"/>
    </location>
</feature>
<feature type="transmembrane region" description="Helical; Name=2" evidence="3">
    <location>
        <begin position="52"/>
        <end position="72"/>
    </location>
</feature>
<feature type="topological domain" description="Extracellular" evidence="8">
    <location>
        <begin position="73"/>
        <end position="113"/>
    </location>
</feature>
<feature type="transmembrane region" description="Helical; Name=3" evidence="3">
    <location>
        <begin position="114"/>
        <end position="134"/>
    </location>
</feature>
<feature type="topological domain" description="Cytoplasmic" evidence="8">
    <location>
        <begin position="135"/>
        <end position="141"/>
    </location>
</feature>
<feature type="transmembrane region" description="Helical; Name=4" evidence="3">
    <location>
        <begin position="142"/>
        <end position="162"/>
    </location>
</feature>
<feature type="topological domain" description="Extracellular" evidence="8">
    <location>
        <begin position="163"/>
        <end position="175"/>
    </location>
</feature>
<feature type="transmembrane region" description="Helical; Name=5" evidence="3">
    <location>
        <begin position="176"/>
        <end position="196"/>
    </location>
</feature>
<feature type="topological domain" description="Cytoplasmic" evidence="8">
    <location>
        <begin position="197"/>
        <end position="214"/>
    </location>
</feature>
<feature type="transmembrane region" description="Helical; Name=6" evidence="3">
    <location>
        <begin position="215"/>
        <end position="235"/>
    </location>
</feature>
<feature type="topological domain" description="Extracellular" evidence="8">
    <location>
        <begin position="236"/>
        <end position="242"/>
    </location>
</feature>
<feature type="transmembrane region" description="Helical; Name=7" evidence="3">
    <location>
        <begin position="243"/>
        <end position="263"/>
    </location>
</feature>
<feature type="topological domain" description="Cytoplasmic" evidence="8">
    <location>
        <begin position="264"/>
        <end position="274"/>
    </location>
</feature>
<feature type="transmembrane region" description="Helical; Name=8" evidence="3">
    <location>
        <begin position="275"/>
        <end position="295"/>
    </location>
</feature>
<feature type="topological domain" description="Extracellular" evidence="8">
    <location>
        <begin position="296"/>
        <end position="298"/>
    </location>
</feature>
<feature type="transmembrane region" description="Helical; Name=9" evidence="3">
    <location>
        <begin position="299"/>
        <end position="319"/>
    </location>
</feature>
<feature type="topological domain" description="Cytoplasmic" evidence="8">
    <location>
        <begin position="320"/>
        <end position="334"/>
    </location>
</feature>
<feature type="transmembrane region" description="Helical; Name=10" evidence="3">
    <location>
        <begin position="335"/>
        <end position="355"/>
    </location>
</feature>
<feature type="topological domain" description="Extracellular" evidence="8">
    <location>
        <begin position="356"/>
        <end position="394"/>
    </location>
</feature>
<feature type="transmembrane region" description="Helical; Name=11" evidence="3">
    <location>
        <begin position="395"/>
        <end position="415"/>
    </location>
</feature>
<feature type="topological domain" description="Cytoplasmic" evidence="8">
    <location>
        <begin position="416"/>
        <end position="480"/>
    </location>
</feature>
<feature type="glycosylation site" description="N-linked (GlcNAc...) asparagine" evidence="4">
    <location>
        <position position="111"/>
    </location>
</feature>
<sequence>MELPSNLLPDEASPEWMNKGDNAWQLTAATMVGLQSIPGLVILYGSLVKKTWAINSAFMAFYAFASVLLCWVSWAYQMSFGEKMVFFLGKPNVALDEKFLLGKAFLGNFPNATMVFYQGVFAGLTLILIAGALLGRMNIRAWMLFVPLWVTFSYTVVAFSIWCPDGWLAKRGVIDFAGGYVIHLSAGVAGFTAAYWVGPRADKDRETFPAATNNMIMVLAGAGLLWMGWSGFNGGAPFVASTIASLAILNTHVCTAASITVWVMLDTFYFGKPTVFGAVQGMITGLVCITPAAGVVQGWAAILMGFISGSIPWYTMMVLHNKVNFLKKIDDPMAVFHTHAIAGALGGILTGFFAVPKLCRLFYMVPDWEKYIGLAYGLQNKGATQAGLKQMVIQIEAIVFVICYNVLMTSLICLIVRVIVPLRLNGDALQMGDKAIHGEDAFALHSEATKFVNIKRNQVYDTQDFSSIPESRSLGELQMV</sequence>
<accession>G7L1W7</accession>
<dbReference type="EMBL" id="CM001223">
    <property type="protein sequence ID" value="AES82665.1"/>
    <property type="molecule type" value="Genomic_DNA"/>
</dbReference>
<dbReference type="EMBL" id="PSQE01000007">
    <property type="protein sequence ID" value="RHN49401.1"/>
    <property type="molecule type" value="Genomic_DNA"/>
</dbReference>
<dbReference type="SMR" id="G7L1W7"/>
<dbReference type="STRING" id="3880.G7L1W7"/>
<dbReference type="GlyCosmos" id="G7L1W7">
    <property type="glycosylation" value="1 site, No reported glycans"/>
</dbReference>
<dbReference type="PaxDb" id="3880-AES82665"/>
<dbReference type="EnsemblPlants" id="rna44226">
    <property type="protein sequence ID" value="RHN49401.1"/>
    <property type="gene ID" value="gene44226"/>
</dbReference>
<dbReference type="GeneID" id="11423183"/>
<dbReference type="Gramene" id="rna44226">
    <property type="protein sequence ID" value="RHN49401.1"/>
    <property type="gene ID" value="gene44226"/>
</dbReference>
<dbReference type="KEGG" id="mtr:11423183"/>
<dbReference type="eggNOG" id="KOG0682">
    <property type="taxonomic scope" value="Eukaryota"/>
</dbReference>
<dbReference type="HOGENOM" id="CLU_000445_33_4_1"/>
<dbReference type="OMA" id="MNFRAWI"/>
<dbReference type="OrthoDB" id="534912at2759"/>
<dbReference type="Proteomes" id="UP000002051">
    <property type="component" value="Chomosome 7"/>
</dbReference>
<dbReference type="Proteomes" id="UP000265566">
    <property type="component" value="Chromosome 7"/>
</dbReference>
<dbReference type="GO" id="GO:0005886">
    <property type="term" value="C:plasma membrane"/>
    <property type="evidence" value="ECO:0000318"/>
    <property type="project" value="GO_Central"/>
</dbReference>
<dbReference type="GO" id="GO:0008519">
    <property type="term" value="F:ammonium channel activity"/>
    <property type="evidence" value="ECO:0000314"/>
    <property type="project" value="UniProtKB"/>
</dbReference>
<dbReference type="GO" id="GO:0072488">
    <property type="term" value="P:ammonium transmembrane transport"/>
    <property type="evidence" value="ECO:0000314"/>
    <property type="project" value="UniProtKB"/>
</dbReference>
<dbReference type="GO" id="GO:0009610">
    <property type="term" value="P:response to symbiotic fungus"/>
    <property type="evidence" value="ECO:0000270"/>
    <property type="project" value="UniProtKB"/>
</dbReference>
<dbReference type="FunFam" id="1.10.3430.10:FF:000005">
    <property type="entry name" value="Ammonium transporter"/>
    <property type="match status" value="1"/>
</dbReference>
<dbReference type="Gene3D" id="1.10.3430.10">
    <property type="entry name" value="Ammonium transporter AmtB like domains"/>
    <property type="match status" value="1"/>
</dbReference>
<dbReference type="InterPro" id="IPR029020">
    <property type="entry name" value="Ammonium/urea_transptr"/>
</dbReference>
<dbReference type="InterPro" id="IPR001905">
    <property type="entry name" value="Ammonium_transpt"/>
</dbReference>
<dbReference type="InterPro" id="IPR018047">
    <property type="entry name" value="Ammonium_transpt_CS"/>
</dbReference>
<dbReference type="InterPro" id="IPR024041">
    <property type="entry name" value="NH4_transpt_AmtB-like_dom"/>
</dbReference>
<dbReference type="InterPro" id="IPR002229">
    <property type="entry name" value="RhesusRHD"/>
</dbReference>
<dbReference type="NCBIfam" id="TIGR00836">
    <property type="entry name" value="amt"/>
    <property type="match status" value="1"/>
</dbReference>
<dbReference type="PANTHER" id="PTHR43029:SF28">
    <property type="entry name" value="AMMONIUM TRANSPORTER 2 MEMBER 4"/>
    <property type="match status" value="1"/>
</dbReference>
<dbReference type="PANTHER" id="PTHR43029">
    <property type="entry name" value="AMMONIUM TRANSPORTER MEP2"/>
    <property type="match status" value="1"/>
</dbReference>
<dbReference type="Pfam" id="PF00909">
    <property type="entry name" value="Ammonium_transp"/>
    <property type="match status" value="1"/>
</dbReference>
<dbReference type="PRINTS" id="PR00342">
    <property type="entry name" value="RHESUSRHD"/>
</dbReference>
<dbReference type="SUPFAM" id="SSF111352">
    <property type="entry name" value="Ammonium transporter"/>
    <property type="match status" value="1"/>
</dbReference>
<dbReference type="PROSITE" id="PS01219">
    <property type="entry name" value="AMMONIUM_TRANSP"/>
    <property type="match status" value="1"/>
</dbReference>
<evidence type="ECO:0000250" key="1">
    <source>
        <dbReference type="UniProtKB" id="G7LAA8"/>
    </source>
</evidence>
<evidence type="ECO:0000250" key="2">
    <source>
        <dbReference type="UniProtKB" id="Q9M6N7"/>
    </source>
</evidence>
<evidence type="ECO:0000255" key="3"/>
<evidence type="ECO:0000255" key="4">
    <source>
        <dbReference type="PROSITE-ProRule" id="PRU00498"/>
    </source>
</evidence>
<evidence type="ECO:0000269" key="5">
    <source>
    </source>
</evidence>
<evidence type="ECO:0000269" key="6">
    <source>
    </source>
</evidence>
<evidence type="ECO:0000303" key="7">
    <source>
    </source>
</evidence>
<evidence type="ECO:0000305" key="8"/>
<evidence type="ECO:0000312" key="9">
    <source>
        <dbReference type="EMBL" id="AES82665.1"/>
    </source>
</evidence>
<evidence type="ECO:0000312" key="10">
    <source>
        <dbReference type="EMBL" id="RHN49401.1"/>
    </source>
</evidence>
<protein>
    <recommendedName>
        <fullName evidence="7">Ammonium transporter 2 member 4</fullName>
        <shortName evidence="7">Ammonium transporter 2;4</shortName>
        <shortName evidence="7">MtAMT2;4</shortName>
    </recommendedName>
</protein>
<gene>
    <name evidence="7" type="primary">AMT2-4</name>
    <name evidence="9" type="ordered locus">MTR_7g115050</name>
    <name evidence="10" type="ORF">MtrunA17_Chr7g0274111</name>
</gene>